<gene>
    <name evidence="1" type="primary">mhpA</name>
    <name type="ordered locus">KPK_2201</name>
</gene>
<protein>
    <recommendedName>
        <fullName evidence="1">3-(3-hydroxy-phenyl)propionate/3-hydroxycinnamic acid hydroxylase</fullName>
        <shortName evidence="1">3-HCI hydroxylase</shortName>
        <shortName evidence="1">3-HPP hydroxylase</shortName>
        <ecNumber evidence="1">1.14.13.127</ecNumber>
    </recommendedName>
</protein>
<organism>
    <name type="scientific">Klebsiella pneumoniae (strain 342)</name>
    <dbReference type="NCBI Taxonomy" id="507522"/>
    <lineage>
        <taxon>Bacteria</taxon>
        <taxon>Pseudomonadati</taxon>
        <taxon>Pseudomonadota</taxon>
        <taxon>Gammaproteobacteria</taxon>
        <taxon>Enterobacterales</taxon>
        <taxon>Enterobacteriaceae</taxon>
        <taxon>Klebsiella/Raoultella group</taxon>
        <taxon>Klebsiella</taxon>
        <taxon>Klebsiella pneumoniae complex</taxon>
    </lineage>
</organism>
<accession>B5XQI9</accession>
<keyword id="KW-0058">Aromatic hydrocarbons catabolism</keyword>
<keyword id="KW-0274">FAD</keyword>
<keyword id="KW-0285">Flavoprotein</keyword>
<keyword id="KW-0520">NAD</keyword>
<keyword id="KW-0560">Oxidoreductase</keyword>
<reference key="1">
    <citation type="journal article" date="2008" name="PLoS Genet.">
        <title>Complete genome sequence of the N2-fixing broad host range endophyte Klebsiella pneumoniae 342 and virulence predictions verified in mice.</title>
        <authorList>
            <person name="Fouts D.E."/>
            <person name="Tyler H.L."/>
            <person name="DeBoy R.T."/>
            <person name="Daugherty S."/>
            <person name="Ren Q."/>
            <person name="Badger J.H."/>
            <person name="Durkin A.S."/>
            <person name="Huot H."/>
            <person name="Shrivastava S."/>
            <person name="Kothari S."/>
            <person name="Dodson R.J."/>
            <person name="Mohamoud Y."/>
            <person name="Khouri H."/>
            <person name="Roesch L.F.W."/>
            <person name="Krogfelt K.A."/>
            <person name="Struve C."/>
            <person name="Triplett E.W."/>
            <person name="Methe B.A."/>
        </authorList>
    </citation>
    <scope>NUCLEOTIDE SEQUENCE [LARGE SCALE GENOMIC DNA]</scope>
    <source>
        <strain>342</strain>
    </source>
</reference>
<feature type="chain" id="PRO_1000186998" description="3-(3-hydroxy-phenyl)propionate/3-hydroxycinnamic acid hydroxylase">
    <location>
        <begin position="1"/>
        <end position="554"/>
    </location>
</feature>
<feature type="binding site" evidence="1">
    <location>
        <begin position="17"/>
        <end position="46"/>
    </location>
    <ligand>
        <name>FAD</name>
        <dbReference type="ChEBI" id="CHEBI:57692"/>
    </ligand>
</feature>
<feature type="binding site" evidence="1">
    <location>
        <begin position="285"/>
        <end position="295"/>
    </location>
    <ligand>
        <name>FAD</name>
        <dbReference type="ChEBI" id="CHEBI:57692"/>
    </ligand>
</feature>
<sequence length="554" mass="61471">MTTSTPDIQPAVQHTAQVAIAGAGPVGLMMANYLGQMGISVLLVEKLDTLIDYPRAIGIDDESLRAMQAVGLVNDVLPHTTPWHAMRFLTPKGRCFADIQPMTDEFGWSRRNAFIQPQVDAVMYHGLQRFPQVRCLFSREVEAFSQNGDGVTLNLKGPDGERETVRADWLVACDGGASFIRRTLNVPFEGKTAPNQWIVIDIANDPLATPHVYLCCDPVRPYVSAALPHGVRRFEFMVMPGETEAQLSEPHNMRRLLSKVLPDPDRVELIRQRVYTHNARLAERFRIDRVLLAGDAAHIMPVWQGQGYNSGMRDAFNLAWKLALVVNGKAGEALLDSYQQERRDHAKAMIDLSVTAGHVLAPPKRWQGAVRDGLSWLLNYLPPVKRYFLEMRFKPMPQYREGALLIDAAGKTSPVGKMFIQPQVTLESGESVLLDEVIGANFAIIGWGCNPQWGLDAGQIARWRAIGVRFIQVVPAVQIHREQDNAPGTLRVGDTQNRLKSWFAQHNTAIAVVRPDRFVAALAIPQTLGAQLTALAEKMTLATGDTARTEEKVA</sequence>
<name>MHPA_KLEP3</name>
<dbReference type="EC" id="1.14.13.127" evidence="1"/>
<dbReference type="EMBL" id="CP000964">
    <property type="protein sequence ID" value="ACI08550.1"/>
    <property type="molecule type" value="Genomic_DNA"/>
</dbReference>
<dbReference type="SMR" id="B5XQI9"/>
<dbReference type="KEGG" id="kpe:KPK_2201"/>
<dbReference type="HOGENOM" id="CLU_009665_20_2_6"/>
<dbReference type="UniPathway" id="UPA00714"/>
<dbReference type="Proteomes" id="UP000001734">
    <property type="component" value="Chromosome"/>
</dbReference>
<dbReference type="GO" id="GO:0008688">
    <property type="term" value="F:3-(3-hydroxyphenyl)propionate hydroxylase activity"/>
    <property type="evidence" value="ECO:0007669"/>
    <property type="project" value="UniProtKB-UniRule"/>
</dbReference>
<dbReference type="GO" id="GO:0071949">
    <property type="term" value="F:FAD binding"/>
    <property type="evidence" value="ECO:0007669"/>
    <property type="project" value="InterPro"/>
</dbReference>
<dbReference type="GO" id="GO:0019622">
    <property type="term" value="P:3-(3-hydroxy)phenylpropionate catabolic process"/>
    <property type="evidence" value="ECO:0007669"/>
    <property type="project" value="UniProtKB-UniRule"/>
</dbReference>
<dbReference type="GO" id="GO:0019380">
    <property type="term" value="P:3-phenylpropionate catabolic process"/>
    <property type="evidence" value="ECO:0007669"/>
    <property type="project" value="UniProtKB-UniPathway"/>
</dbReference>
<dbReference type="FunFam" id="3.50.50.60:FF:000126">
    <property type="entry name" value="3-(3-hydroxy-phenyl)propionate/3-hydroxycinnamic acid hydroxylase"/>
    <property type="match status" value="1"/>
</dbReference>
<dbReference type="Gene3D" id="3.30.70.2450">
    <property type="match status" value="1"/>
</dbReference>
<dbReference type="Gene3D" id="3.50.50.60">
    <property type="entry name" value="FAD/NAD(P)-binding domain"/>
    <property type="match status" value="1"/>
</dbReference>
<dbReference type="HAMAP" id="MF_01652">
    <property type="entry name" value="MhpA"/>
    <property type="match status" value="1"/>
</dbReference>
<dbReference type="InterPro" id="IPR023786">
    <property type="entry name" value="3-HPP/3HCI_hydroxylase"/>
</dbReference>
<dbReference type="InterPro" id="IPR002938">
    <property type="entry name" value="FAD-bd"/>
</dbReference>
<dbReference type="InterPro" id="IPR036188">
    <property type="entry name" value="FAD/NAD-bd_sf"/>
</dbReference>
<dbReference type="InterPro" id="IPR050631">
    <property type="entry name" value="PheA/TfdB_FAD_monoxygenase"/>
</dbReference>
<dbReference type="NCBIfam" id="NF004827">
    <property type="entry name" value="PRK06183.1-1"/>
    <property type="match status" value="1"/>
</dbReference>
<dbReference type="NCBIfam" id="NF004829">
    <property type="entry name" value="PRK06183.1-3"/>
    <property type="match status" value="1"/>
</dbReference>
<dbReference type="NCBIfam" id="NF004831">
    <property type="entry name" value="PRK06183.1-5"/>
    <property type="match status" value="1"/>
</dbReference>
<dbReference type="PANTHER" id="PTHR43476">
    <property type="entry name" value="3-(3-HYDROXY-PHENYL)PROPIONATE/3-HYDROXYCINNAMIC ACID HYDROXYLASE"/>
    <property type="match status" value="1"/>
</dbReference>
<dbReference type="PANTHER" id="PTHR43476:SF3">
    <property type="entry name" value="FAD-BINDING MONOOXYGENASE"/>
    <property type="match status" value="1"/>
</dbReference>
<dbReference type="Pfam" id="PF01494">
    <property type="entry name" value="FAD_binding_3"/>
    <property type="match status" value="1"/>
</dbReference>
<dbReference type="PRINTS" id="PR00420">
    <property type="entry name" value="RNGMNOXGNASE"/>
</dbReference>
<dbReference type="SUPFAM" id="SSF51905">
    <property type="entry name" value="FAD/NAD(P)-binding domain"/>
    <property type="match status" value="1"/>
</dbReference>
<proteinExistence type="inferred from homology"/>
<comment type="function">
    <text evidence="1">Catalyzes the insertion of one atom of molecular oxygen into position 2 of the phenyl ring of 3-(3-hydroxyphenyl)propionate (3-HPP) and hydroxycinnamic acid (3HCI).</text>
</comment>
<comment type="catalytic activity">
    <reaction evidence="1">
        <text>3-(3-hydroxyphenyl)propanoate + NADH + O2 + H(+) = 3-(2,3-dihydroxyphenyl)propanoate + NAD(+) + H2O</text>
        <dbReference type="Rhea" id="RHEA:24785"/>
        <dbReference type="ChEBI" id="CHEBI:15377"/>
        <dbReference type="ChEBI" id="CHEBI:15378"/>
        <dbReference type="ChEBI" id="CHEBI:15379"/>
        <dbReference type="ChEBI" id="CHEBI:46951"/>
        <dbReference type="ChEBI" id="CHEBI:57277"/>
        <dbReference type="ChEBI" id="CHEBI:57540"/>
        <dbReference type="ChEBI" id="CHEBI:57945"/>
        <dbReference type="EC" id="1.14.13.127"/>
    </reaction>
</comment>
<comment type="catalytic activity">
    <reaction evidence="1">
        <text>(2E)-3-(3-hydroxyphenyl)prop-2-enoate + NADH + O2 + H(+) = (2E)-3-(2,3-dihydroxyphenyl)prop-2-enoate + NAD(+) + H2O</text>
        <dbReference type="Rhea" id="RHEA:27846"/>
        <dbReference type="ChEBI" id="CHEBI:15377"/>
        <dbReference type="ChEBI" id="CHEBI:15378"/>
        <dbReference type="ChEBI" id="CHEBI:15379"/>
        <dbReference type="ChEBI" id="CHEBI:47928"/>
        <dbReference type="ChEBI" id="CHEBI:57540"/>
        <dbReference type="ChEBI" id="CHEBI:57945"/>
        <dbReference type="ChEBI" id="CHEBI:58642"/>
        <dbReference type="EC" id="1.14.13.127"/>
    </reaction>
</comment>
<comment type="cofactor">
    <cofactor evidence="1">
        <name>FAD</name>
        <dbReference type="ChEBI" id="CHEBI:57692"/>
    </cofactor>
</comment>
<comment type="pathway">
    <text evidence="1">Aromatic compound metabolism; 3-phenylpropanoate degradation.</text>
</comment>
<comment type="similarity">
    <text evidence="1">Belongs to the PheA/TfdB FAD monooxygenase family.</text>
</comment>
<evidence type="ECO:0000255" key="1">
    <source>
        <dbReference type="HAMAP-Rule" id="MF_01652"/>
    </source>
</evidence>